<accession>Q6AYF4</accession>
<evidence type="ECO:0000250" key="1">
    <source>
        <dbReference type="UniProtKB" id="P05106"/>
    </source>
</evidence>
<evidence type="ECO:0000250" key="2">
    <source>
        <dbReference type="UniProtKB" id="P18564"/>
    </source>
</evidence>
<evidence type="ECO:0000250" key="3">
    <source>
        <dbReference type="UniProtKB" id="Q9Z0T9"/>
    </source>
</evidence>
<evidence type="ECO:0000255" key="4"/>
<evidence type="ECO:0000255" key="5">
    <source>
        <dbReference type="PROSITE-ProRule" id="PRU01392"/>
    </source>
</evidence>
<evidence type="ECO:0000305" key="6"/>
<comment type="function">
    <text evidence="2 3">Integrin alpha-V:beta-6 (ITGAV:ITGB6) is a receptor for fibronectin and cytotactin (By similarity). It recognizes the sequence R-G-D in its ligands (By similarity). ITGAV:ITGB6 acts as a receptor for fibrillin-1 (FBN1) and mediates R-G-D-dependent cell adhesion to FBN1 (By similarity). Integrin alpha-V:beta-6 (ITGAV:ITGB6) mediates R-G-D-dependent release of transforming growth factor beta-1 (TGF-beta-1) from regulatory Latency-associated peptide (LAP), thereby playing a key role in TGF-beta-1 activation (By similarity).</text>
</comment>
<comment type="subunit">
    <text evidence="2 3">Heterodimer of an alpha and a beta subunit (By similarity). Interacts with FLNB. Interacts with HAX1. ITGAV:ITGB6 interacts with FBN1 (By similarity). ITGAV:ITGB6 interacts with TGFB1 (By similarity).</text>
</comment>
<comment type="subcellular location">
    <subcellularLocation>
        <location evidence="2">Cell membrane</location>
        <topology evidence="2">Single-pass type I membrane protein</topology>
    </subcellularLocation>
    <subcellularLocation>
        <location evidence="2">Cell junction</location>
        <location evidence="2">Focal adhesion</location>
    </subcellularLocation>
</comment>
<comment type="domain">
    <text evidence="1">The VWFA domain (or beta I domain) contains three cation-binding sites: the ligand-associated metal ion-binding site (LIMBS or SyMBS), the metal ion-dependent adhesion site (MIDAS), and the adjacent MIDAS site (ADMIDAS). This domain is also part of the ligand-binding site.</text>
</comment>
<comment type="similarity">
    <text evidence="6">Belongs to the integrin beta chain family.</text>
</comment>
<dbReference type="EMBL" id="BC079069">
    <property type="protein sequence ID" value="AAH79069.1"/>
    <property type="molecule type" value="mRNA"/>
</dbReference>
<dbReference type="RefSeq" id="NP_001004263.1">
    <property type="nucleotide sequence ID" value="NM_001004263.2"/>
</dbReference>
<dbReference type="RefSeq" id="NP_001418605.1">
    <property type="nucleotide sequence ID" value="NM_001431676.1"/>
</dbReference>
<dbReference type="RefSeq" id="NP_001418606.1">
    <property type="nucleotide sequence ID" value="NM_001431677.1"/>
</dbReference>
<dbReference type="RefSeq" id="XP_006234294.1">
    <property type="nucleotide sequence ID" value="XM_006234232.2"/>
</dbReference>
<dbReference type="RefSeq" id="XP_006234295.1">
    <property type="nucleotide sequence ID" value="XM_006234233.3"/>
</dbReference>
<dbReference type="SMR" id="Q6AYF4"/>
<dbReference type="FunCoup" id="Q6AYF4">
    <property type="interactions" value="228"/>
</dbReference>
<dbReference type="STRING" id="10116.ENSRNOP00000074271"/>
<dbReference type="GlyCosmos" id="Q6AYF4">
    <property type="glycosylation" value="10 sites, No reported glycans"/>
</dbReference>
<dbReference type="GlyGen" id="Q6AYF4">
    <property type="glycosylation" value="11 sites"/>
</dbReference>
<dbReference type="PhosphoSitePlus" id="Q6AYF4"/>
<dbReference type="jPOST" id="Q6AYF4"/>
<dbReference type="PaxDb" id="10116-ENSRNOP00000011030"/>
<dbReference type="Ensembl" id="ENSRNOT00000011030.5">
    <property type="protein sequence ID" value="ENSRNOP00000011030.4"/>
    <property type="gene ID" value="ENSRNOG00000008346.7"/>
</dbReference>
<dbReference type="GeneID" id="311061"/>
<dbReference type="KEGG" id="rno:311061"/>
<dbReference type="UCSC" id="RGD:1303119">
    <property type="organism name" value="rat"/>
</dbReference>
<dbReference type="AGR" id="RGD:1303119"/>
<dbReference type="CTD" id="3694"/>
<dbReference type="RGD" id="1303119">
    <property type="gene designation" value="Itgb6"/>
</dbReference>
<dbReference type="eggNOG" id="KOG1226">
    <property type="taxonomic scope" value="Eukaryota"/>
</dbReference>
<dbReference type="GeneTree" id="ENSGT01110000267169"/>
<dbReference type="InParanoid" id="Q6AYF4"/>
<dbReference type="OMA" id="WIYTVEG"/>
<dbReference type="OrthoDB" id="410592at2759"/>
<dbReference type="PhylomeDB" id="Q6AYF4"/>
<dbReference type="TreeFam" id="TF105392"/>
<dbReference type="Reactome" id="R-RNO-1566948">
    <property type="pathway name" value="Elastic fibre formation"/>
</dbReference>
<dbReference type="Reactome" id="R-RNO-2129379">
    <property type="pathway name" value="Molecules associated with elastic fibres"/>
</dbReference>
<dbReference type="Reactome" id="R-RNO-216083">
    <property type="pathway name" value="Integrin cell surface interactions"/>
</dbReference>
<dbReference type="Reactome" id="R-RNO-2173789">
    <property type="pathway name" value="TGF-beta receptor signaling activates SMADs"/>
</dbReference>
<dbReference type="Reactome" id="R-RNO-3000178">
    <property type="pathway name" value="ECM proteoglycans"/>
</dbReference>
<dbReference type="PRO" id="PR:Q6AYF4"/>
<dbReference type="Proteomes" id="UP000002494">
    <property type="component" value="Chromosome 3"/>
</dbReference>
<dbReference type="Bgee" id="ENSRNOG00000008346">
    <property type="expression patterns" value="Expressed in lung and 13 other cell types or tissues"/>
</dbReference>
<dbReference type="GO" id="GO:0009986">
    <property type="term" value="C:cell surface"/>
    <property type="evidence" value="ECO:0000266"/>
    <property type="project" value="RGD"/>
</dbReference>
<dbReference type="GO" id="GO:0009897">
    <property type="term" value="C:external side of plasma membrane"/>
    <property type="evidence" value="ECO:0000266"/>
    <property type="project" value="RGD"/>
</dbReference>
<dbReference type="GO" id="GO:0005925">
    <property type="term" value="C:focal adhesion"/>
    <property type="evidence" value="ECO:0000250"/>
    <property type="project" value="UniProtKB"/>
</dbReference>
<dbReference type="GO" id="GO:0034685">
    <property type="term" value="C:integrin alphav-beta6 complex"/>
    <property type="evidence" value="ECO:0000250"/>
    <property type="project" value="UniProtKB"/>
</dbReference>
<dbReference type="GO" id="GO:0043235">
    <property type="term" value="C:receptor complex"/>
    <property type="evidence" value="ECO:0000266"/>
    <property type="project" value="RGD"/>
</dbReference>
<dbReference type="GO" id="GO:0005178">
    <property type="term" value="F:integrin binding"/>
    <property type="evidence" value="ECO:0000266"/>
    <property type="project" value="RGD"/>
</dbReference>
<dbReference type="GO" id="GO:0046872">
    <property type="term" value="F:metal ion binding"/>
    <property type="evidence" value="ECO:0007669"/>
    <property type="project" value="UniProtKB-KW"/>
</dbReference>
<dbReference type="GO" id="GO:0140677">
    <property type="term" value="F:molecular function activator activity"/>
    <property type="evidence" value="ECO:0000266"/>
    <property type="project" value="RGD"/>
</dbReference>
<dbReference type="GO" id="GO:0060348">
    <property type="term" value="P:bone development"/>
    <property type="evidence" value="ECO:0000266"/>
    <property type="project" value="RGD"/>
</dbReference>
<dbReference type="GO" id="GO:0060435">
    <property type="term" value="P:bronchiole development"/>
    <property type="evidence" value="ECO:0000266"/>
    <property type="project" value="RGD"/>
</dbReference>
<dbReference type="GO" id="GO:0033627">
    <property type="term" value="P:cell adhesion mediated by integrin"/>
    <property type="evidence" value="ECO:0000250"/>
    <property type="project" value="UniProtKB"/>
</dbReference>
<dbReference type="GO" id="GO:0016477">
    <property type="term" value="P:cell migration"/>
    <property type="evidence" value="ECO:0000318"/>
    <property type="project" value="GO_Central"/>
</dbReference>
<dbReference type="GO" id="GO:0000902">
    <property type="term" value="P:cell morphogenesis"/>
    <property type="evidence" value="ECO:0000266"/>
    <property type="project" value="RGD"/>
</dbReference>
<dbReference type="GO" id="GO:0098609">
    <property type="term" value="P:cell-cell adhesion"/>
    <property type="evidence" value="ECO:0000318"/>
    <property type="project" value="GO_Central"/>
</dbReference>
<dbReference type="GO" id="GO:0007160">
    <property type="term" value="P:cell-matrix adhesion"/>
    <property type="evidence" value="ECO:0000266"/>
    <property type="project" value="RGD"/>
</dbReference>
<dbReference type="GO" id="GO:0071479">
    <property type="term" value="P:cellular response to ionizing radiation"/>
    <property type="evidence" value="ECO:0000266"/>
    <property type="project" value="RGD"/>
</dbReference>
<dbReference type="GO" id="GO:0070166">
    <property type="term" value="P:enamel mineralization"/>
    <property type="evidence" value="ECO:0000266"/>
    <property type="project" value="RGD"/>
</dbReference>
<dbReference type="GO" id="GO:0010467">
    <property type="term" value="P:gene expression"/>
    <property type="evidence" value="ECO:0000266"/>
    <property type="project" value="RGD"/>
</dbReference>
<dbReference type="GO" id="GO:0060022">
    <property type="term" value="P:hard palate development"/>
    <property type="evidence" value="ECO:0000266"/>
    <property type="project" value="RGD"/>
</dbReference>
<dbReference type="GO" id="GO:0006955">
    <property type="term" value="P:immune response"/>
    <property type="evidence" value="ECO:0000266"/>
    <property type="project" value="RGD"/>
</dbReference>
<dbReference type="GO" id="GO:0006954">
    <property type="term" value="P:inflammatory response"/>
    <property type="evidence" value="ECO:0000266"/>
    <property type="project" value="RGD"/>
</dbReference>
<dbReference type="GO" id="GO:0007229">
    <property type="term" value="P:integrin-mediated signaling pathway"/>
    <property type="evidence" value="ECO:0000318"/>
    <property type="project" value="GO_Central"/>
</dbReference>
<dbReference type="GO" id="GO:0061520">
    <property type="term" value="P:Langerhans cell differentiation"/>
    <property type="evidence" value="ECO:0000266"/>
    <property type="project" value="RGD"/>
</dbReference>
<dbReference type="GO" id="GO:0048286">
    <property type="term" value="P:lung alveolus development"/>
    <property type="evidence" value="ECO:0000266"/>
    <property type="project" value="RGD"/>
</dbReference>
<dbReference type="GO" id="GO:0055091">
    <property type="term" value="P:phospholipid homeostasis"/>
    <property type="evidence" value="ECO:0000266"/>
    <property type="project" value="RGD"/>
</dbReference>
<dbReference type="GO" id="GO:0009615">
    <property type="term" value="P:response to virus"/>
    <property type="evidence" value="ECO:0000266"/>
    <property type="project" value="RGD"/>
</dbReference>
<dbReference type="GO" id="GO:0009611">
    <property type="term" value="P:response to wounding"/>
    <property type="evidence" value="ECO:0000266"/>
    <property type="project" value="RGD"/>
</dbReference>
<dbReference type="GO" id="GO:0043588">
    <property type="term" value="P:skin development"/>
    <property type="evidence" value="ECO:0000266"/>
    <property type="project" value="RGD"/>
</dbReference>
<dbReference type="GO" id="GO:0043129">
    <property type="term" value="P:surfactant homeostasis"/>
    <property type="evidence" value="ECO:0000266"/>
    <property type="project" value="RGD"/>
</dbReference>
<dbReference type="GO" id="GO:0071604">
    <property type="term" value="P:transforming growth factor beta production"/>
    <property type="evidence" value="ECO:0000266"/>
    <property type="project" value="RGD"/>
</dbReference>
<dbReference type="GO" id="GO:0007179">
    <property type="term" value="P:transforming growth factor beta receptor signaling pathway"/>
    <property type="evidence" value="ECO:0000266"/>
    <property type="project" value="RGD"/>
</dbReference>
<dbReference type="GO" id="GO:0042060">
    <property type="term" value="P:wound healing"/>
    <property type="evidence" value="ECO:0000266"/>
    <property type="project" value="RGD"/>
</dbReference>
<dbReference type="FunFam" id="1.20.5.100:FF:000004">
    <property type="entry name" value="Integrin beta"/>
    <property type="match status" value="1"/>
</dbReference>
<dbReference type="FunFam" id="2.10.25.10:FF:000043">
    <property type="entry name" value="Integrin beta"/>
    <property type="match status" value="1"/>
</dbReference>
<dbReference type="FunFam" id="2.10.25.10:FF:000075">
    <property type="entry name" value="Integrin beta"/>
    <property type="match status" value="1"/>
</dbReference>
<dbReference type="FunFam" id="2.10.25.10:FF:000328">
    <property type="entry name" value="Integrin beta"/>
    <property type="match status" value="1"/>
</dbReference>
<dbReference type="FunFam" id="2.60.40.1510:FF:000021">
    <property type="entry name" value="Integrin beta"/>
    <property type="match status" value="1"/>
</dbReference>
<dbReference type="FunFam" id="3.30.1680.10:FF:000002">
    <property type="entry name" value="Integrin beta"/>
    <property type="match status" value="1"/>
</dbReference>
<dbReference type="FunFam" id="3.40.50.410:FF:000002">
    <property type="entry name" value="Integrin beta"/>
    <property type="match status" value="1"/>
</dbReference>
<dbReference type="Gene3D" id="4.10.1240.30">
    <property type="match status" value="1"/>
</dbReference>
<dbReference type="Gene3D" id="1.20.5.100">
    <property type="entry name" value="Cytochrome c1, transmembrane anchor, C-terminal"/>
    <property type="match status" value="1"/>
</dbReference>
<dbReference type="Gene3D" id="2.10.25.10">
    <property type="entry name" value="Laminin"/>
    <property type="match status" value="4"/>
</dbReference>
<dbReference type="Gene3D" id="3.30.1680.10">
    <property type="entry name" value="ligand-binding face of the semaphorins, domain 2"/>
    <property type="match status" value="1"/>
</dbReference>
<dbReference type="Gene3D" id="2.60.40.1510">
    <property type="entry name" value="ntegrin, alpha v. Chain A, domain 3"/>
    <property type="match status" value="1"/>
</dbReference>
<dbReference type="Gene3D" id="3.40.50.410">
    <property type="entry name" value="von Willebrand factor, type A domain"/>
    <property type="match status" value="1"/>
</dbReference>
<dbReference type="InterPro" id="IPR013111">
    <property type="entry name" value="EGF_extracell"/>
</dbReference>
<dbReference type="InterPro" id="IPR040622">
    <property type="entry name" value="I-EGF_1"/>
</dbReference>
<dbReference type="InterPro" id="IPR033760">
    <property type="entry name" value="Integrin_beta_N"/>
</dbReference>
<dbReference type="InterPro" id="IPR015812">
    <property type="entry name" value="Integrin_bsu"/>
</dbReference>
<dbReference type="InterPro" id="IPR014836">
    <property type="entry name" value="Integrin_bsu_cyt_dom"/>
</dbReference>
<dbReference type="InterPro" id="IPR012896">
    <property type="entry name" value="Integrin_bsu_tail"/>
</dbReference>
<dbReference type="InterPro" id="IPR036349">
    <property type="entry name" value="Integrin_bsu_tail_dom_sf"/>
</dbReference>
<dbReference type="InterPro" id="IPR002369">
    <property type="entry name" value="Integrin_bsu_VWA"/>
</dbReference>
<dbReference type="InterPro" id="IPR032695">
    <property type="entry name" value="Integrin_dom_sf"/>
</dbReference>
<dbReference type="InterPro" id="IPR016201">
    <property type="entry name" value="PSI"/>
</dbReference>
<dbReference type="InterPro" id="IPR036465">
    <property type="entry name" value="vWFA_dom_sf"/>
</dbReference>
<dbReference type="PANTHER" id="PTHR10082">
    <property type="entry name" value="INTEGRIN BETA SUBUNIT"/>
    <property type="match status" value="1"/>
</dbReference>
<dbReference type="PANTHER" id="PTHR10082:SF11">
    <property type="entry name" value="INTEGRIN BETA-6"/>
    <property type="match status" value="1"/>
</dbReference>
<dbReference type="Pfam" id="PF07974">
    <property type="entry name" value="EGF_2"/>
    <property type="match status" value="1"/>
</dbReference>
<dbReference type="Pfam" id="PF23105">
    <property type="entry name" value="EGF_integrin"/>
    <property type="match status" value="1"/>
</dbReference>
<dbReference type="Pfam" id="PF18372">
    <property type="entry name" value="I-EGF_1"/>
    <property type="match status" value="1"/>
</dbReference>
<dbReference type="Pfam" id="PF08725">
    <property type="entry name" value="Integrin_b_cyt"/>
    <property type="match status" value="1"/>
</dbReference>
<dbReference type="Pfam" id="PF07965">
    <property type="entry name" value="Integrin_B_tail"/>
    <property type="match status" value="1"/>
</dbReference>
<dbReference type="Pfam" id="PF00362">
    <property type="entry name" value="Integrin_beta"/>
    <property type="match status" value="1"/>
</dbReference>
<dbReference type="Pfam" id="PF17205">
    <property type="entry name" value="PSI_integrin"/>
    <property type="match status" value="1"/>
</dbReference>
<dbReference type="PIRSF" id="PIRSF002512">
    <property type="entry name" value="Integrin_B"/>
    <property type="match status" value="1"/>
</dbReference>
<dbReference type="PRINTS" id="PR01186">
    <property type="entry name" value="INTEGRINB"/>
</dbReference>
<dbReference type="SMART" id="SM00187">
    <property type="entry name" value="INB"/>
    <property type="match status" value="1"/>
</dbReference>
<dbReference type="SMART" id="SM01241">
    <property type="entry name" value="Integrin_b_cyt"/>
    <property type="match status" value="1"/>
</dbReference>
<dbReference type="SMART" id="SM01242">
    <property type="entry name" value="Integrin_B_tail"/>
    <property type="match status" value="1"/>
</dbReference>
<dbReference type="SMART" id="SM00423">
    <property type="entry name" value="PSI"/>
    <property type="match status" value="1"/>
</dbReference>
<dbReference type="SUPFAM" id="SSF57196">
    <property type="entry name" value="EGF/Laminin"/>
    <property type="match status" value="2"/>
</dbReference>
<dbReference type="SUPFAM" id="SSF69687">
    <property type="entry name" value="Integrin beta tail domain"/>
    <property type="match status" value="1"/>
</dbReference>
<dbReference type="SUPFAM" id="SSF69179">
    <property type="entry name" value="Integrin domains"/>
    <property type="match status" value="2"/>
</dbReference>
<dbReference type="SUPFAM" id="SSF103575">
    <property type="entry name" value="Plexin repeat"/>
    <property type="match status" value="1"/>
</dbReference>
<dbReference type="SUPFAM" id="SSF53300">
    <property type="entry name" value="vWA-like"/>
    <property type="match status" value="1"/>
</dbReference>
<dbReference type="PROSITE" id="PS00022">
    <property type="entry name" value="EGF_1"/>
    <property type="match status" value="2"/>
</dbReference>
<dbReference type="PROSITE" id="PS01186">
    <property type="entry name" value="EGF_2"/>
    <property type="match status" value="1"/>
</dbReference>
<dbReference type="PROSITE" id="PS00243">
    <property type="entry name" value="I_EGF_1"/>
    <property type="match status" value="2"/>
</dbReference>
<dbReference type="PROSITE" id="PS52047">
    <property type="entry name" value="I_EGF_2"/>
    <property type="match status" value="4"/>
</dbReference>
<sequence>MGIELVCLFLLLLGRNDHVQGGCAWSGAETCSDCLLTGPHCAWCSQENFTHLSGAGERCDTPENLLAKGCQLPFIENPVSQVEILQNKPLSVGRQKNSSDIVQIAPQSLVLKLRPGGEQTLQVQVRQTEDYPVDLYYLMDLSASMDDDLNTIKELGSRLAKEMSKLTSNFRLGFGSFVEKPVSPFMKTTPEEITNPCSSIPYFCLPTFGFKHILPLTDDAERFNEIVRKQKISANIDTPEGGFDAIMQAAVCKEKIGWRNDSLHLLVFVSDADSHFGMDSKLAGIVIPNDGLCHLDNRNEYSMSTVLEYPTIGQLIDKLVQNNVLLIFAVTQEQVHLYENYAKLIPGATVGLLQKDSGNILQLIISAYEELRSEVELEVLGDTEGLNLSFTALCSNGILFPHQKKCSHMKVGDTASFNVSVSITNCEKRSRKLIIKPVGLGDTLEILVSAECDCDCQREVEANSSKCHHGNGSFQCGVCACNPGHMGPRCECGEDMVSTDSCKESPGHPSCSGRGDCYCGQCVCHLSPYGSIYGPYCQCDNFSCLRHKGLLCGDNGDCDCGECVCRDGWTGEYCNCTTSRDACASEDGVLCSGRGDCVCGKCVCRNPGASGPTCERCPTCGDPCNSRRSCIECYLSADGQAQEECEDKCKATGATISEEEFSKDTSVPCSLQGENECLITFLITADNEGKTIIHNISEKDCPKPPNIPMIMLGVSLAILLIGVVLLCIWKLLVSFHDRKEVAKFEAERSKAKWQTGTNPLYRGSTSTFKNVTYKHREKHKVGLSSDG</sequence>
<protein>
    <recommendedName>
        <fullName>Integrin beta-6</fullName>
    </recommendedName>
</protein>
<organism>
    <name type="scientific">Rattus norvegicus</name>
    <name type="common">Rat</name>
    <dbReference type="NCBI Taxonomy" id="10116"/>
    <lineage>
        <taxon>Eukaryota</taxon>
        <taxon>Metazoa</taxon>
        <taxon>Chordata</taxon>
        <taxon>Craniata</taxon>
        <taxon>Vertebrata</taxon>
        <taxon>Euteleostomi</taxon>
        <taxon>Mammalia</taxon>
        <taxon>Eutheria</taxon>
        <taxon>Euarchontoglires</taxon>
        <taxon>Glires</taxon>
        <taxon>Rodentia</taxon>
        <taxon>Myomorpha</taxon>
        <taxon>Muroidea</taxon>
        <taxon>Muridae</taxon>
        <taxon>Murinae</taxon>
        <taxon>Rattus</taxon>
    </lineage>
</organism>
<gene>
    <name type="primary">Itgb6</name>
</gene>
<proteinExistence type="evidence at transcript level"/>
<keyword id="KW-0106">Calcium</keyword>
<keyword id="KW-0130">Cell adhesion</keyword>
<keyword id="KW-0965">Cell junction</keyword>
<keyword id="KW-1003">Cell membrane</keyword>
<keyword id="KW-1015">Disulfide bond</keyword>
<keyword id="KW-0245">EGF-like domain</keyword>
<keyword id="KW-0325">Glycoprotein</keyword>
<keyword id="KW-0401">Integrin</keyword>
<keyword id="KW-0460">Magnesium</keyword>
<keyword id="KW-0472">Membrane</keyword>
<keyword id="KW-0479">Metal-binding</keyword>
<keyword id="KW-0675">Receptor</keyword>
<keyword id="KW-1185">Reference proteome</keyword>
<keyword id="KW-0677">Repeat</keyword>
<keyword id="KW-0732">Signal</keyword>
<keyword id="KW-0812">Transmembrane</keyword>
<keyword id="KW-1133">Transmembrane helix</keyword>
<reference key="1">
    <citation type="journal article" date="2004" name="Genome Res.">
        <title>The status, quality, and expansion of the NIH full-length cDNA project: the Mammalian Gene Collection (MGC).</title>
        <authorList>
            <consortium name="The MGC Project Team"/>
        </authorList>
    </citation>
    <scope>NUCLEOTIDE SEQUENCE [LARGE SCALE MRNA]</scope>
    <source>
        <tissue>Lung</tissue>
    </source>
</reference>
<name>ITB6_RAT</name>
<feature type="signal peptide" evidence="4">
    <location>
        <begin position="1"/>
        <end position="21"/>
    </location>
</feature>
<feature type="chain" id="PRO_0000273712" description="Integrin beta-6">
    <location>
        <begin position="22"/>
        <end position="787"/>
    </location>
</feature>
<feature type="topological domain" description="Extracellular" evidence="4">
    <location>
        <begin position="22"/>
        <end position="708"/>
    </location>
</feature>
<feature type="transmembrane region" description="Helical" evidence="4">
    <location>
        <begin position="709"/>
        <end position="729"/>
    </location>
</feature>
<feature type="topological domain" description="Cytoplasmic" evidence="4">
    <location>
        <begin position="730"/>
        <end position="787"/>
    </location>
</feature>
<feature type="domain" description="PSI" evidence="4">
    <location>
        <begin position="22"/>
        <end position="71"/>
    </location>
</feature>
<feature type="domain" description="VWFA" evidence="1">
    <location>
        <begin position="131"/>
        <end position="371"/>
    </location>
</feature>
<feature type="domain" description="I-EGF 1" evidence="5">
    <location>
        <begin position="456"/>
        <end position="491"/>
    </location>
</feature>
<feature type="domain" description="I-EGF 2" evidence="5">
    <location>
        <begin position="492"/>
        <end position="538"/>
    </location>
</feature>
<feature type="domain" description="I-EGF 3" evidence="5">
    <location>
        <begin position="539"/>
        <end position="575"/>
    </location>
</feature>
<feature type="domain" description="I-EGF 4" evidence="5">
    <location>
        <begin position="576"/>
        <end position="615"/>
    </location>
</feature>
<feature type="region of interest" description="Interaction with HAX1" evidence="2">
    <location>
        <begin position="730"/>
        <end position="757"/>
    </location>
</feature>
<feature type="binding site" description="in MIDAS binding site" evidence="2">
    <location>
        <position position="140"/>
    </location>
    <ligand>
        <name>Mg(2+)</name>
        <dbReference type="ChEBI" id="CHEBI:18420"/>
    </ligand>
</feature>
<feature type="binding site" description="in MIDAS binding site" evidence="2">
    <location>
        <position position="142"/>
    </location>
    <ligand>
        <name>Mg(2+)</name>
        <dbReference type="ChEBI" id="CHEBI:18420"/>
    </ligand>
</feature>
<feature type="binding site" description="in ADMIDAS binding site" evidence="2">
    <location>
        <position position="144"/>
    </location>
    <ligand>
        <name>Ca(2+)</name>
        <dbReference type="ChEBI" id="CHEBI:29108"/>
        <label>1</label>
    </ligand>
</feature>
<feature type="binding site" description="in MIDAS binding site" evidence="1">
    <location>
        <position position="144"/>
    </location>
    <ligand>
        <name>Mg(2+)</name>
        <dbReference type="ChEBI" id="CHEBI:18420"/>
    </ligand>
</feature>
<feature type="binding site" description="in ADMIDAS binding site" evidence="2">
    <location>
        <position position="147"/>
    </location>
    <ligand>
        <name>Ca(2+)</name>
        <dbReference type="ChEBI" id="CHEBI:29108"/>
        <label>1</label>
    </ligand>
</feature>
<feature type="binding site" description="in ADMIDAS binding site" evidence="2">
    <location>
        <position position="148"/>
    </location>
    <ligand>
        <name>Ca(2+)</name>
        <dbReference type="ChEBI" id="CHEBI:29108"/>
        <label>1</label>
    </ligand>
</feature>
<feature type="binding site" description="in LIMBS binding site" evidence="2">
    <location>
        <position position="179"/>
    </location>
    <ligand>
        <name>Ca(2+)</name>
        <dbReference type="ChEBI" id="CHEBI:29108"/>
        <label>2</label>
    </ligand>
</feature>
<feature type="binding site" description="in LIMBS binding site" evidence="2">
    <location>
        <position position="235"/>
    </location>
    <ligand>
        <name>Ca(2+)</name>
        <dbReference type="ChEBI" id="CHEBI:29108"/>
        <label>2</label>
    </ligand>
</feature>
<feature type="binding site" description="in LIMBS binding site" evidence="2">
    <location>
        <position position="237"/>
    </location>
    <ligand>
        <name>Ca(2+)</name>
        <dbReference type="ChEBI" id="CHEBI:29108"/>
        <label>2</label>
    </ligand>
</feature>
<feature type="binding site" description="in LIMBS binding site" evidence="2">
    <location>
        <position position="239"/>
    </location>
    <ligand>
        <name>Ca(2+)</name>
        <dbReference type="ChEBI" id="CHEBI:29108"/>
        <label>2</label>
    </ligand>
</feature>
<feature type="binding site" description="in LIMBS binding site" evidence="2">
    <location>
        <position position="240"/>
    </location>
    <ligand>
        <name>Ca(2+)</name>
        <dbReference type="ChEBI" id="CHEBI:29108"/>
        <label>2</label>
    </ligand>
</feature>
<feature type="binding site" description="in MIDAS binding site" evidence="2">
    <location>
        <position position="240"/>
    </location>
    <ligand>
        <name>Mg(2+)</name>
        <dbReference type="ChEBI" id="CHEBI:18420"/>
    </ligand>
</feature>
<feature type="binding site" description="in ADMIDAS binding site and liganded-open conformation" evidence="1">
    <location>
        <position position="271"/>
    </location>
    <ligand>
        <name>Ca(2+)</name>
        <dbReference type="ChEBI" id="CHEBI:29108"/>
        <label>1</label>
    </ligand>
</feature>
<feature type="binding site" description="in ADMIDAS binding site and unliganded-closed conformation" evidence="2">
    <location>
        <position position="355"/>
    </location>
    <ligand>
        <name>Ca(2+)</name>
        <dbReference type="ChEBI" id="CHEBI:29108"/>
        <label>1</label>
    </ligand>
</feature>
<feature type="glycosylation site" description="N-linked (GlcNAc...) asparagine" evidence="4">
    <location>
        <position position="48"/>
    </location>
</feature>
<feature type="glycosylation site" description="N-linked (GlcNAc...) asparagine" evidence="4">
    <location>
        <position position="97"/>
    </location>
</feature>
<feature type="glycosylation site" description="N-linked (GlcNAc...) asparagine" evidence="4">
    <location>
        <position position="260"/>
    </location>
</feature>
<feature type="glycosylation site" description="N-linked (GlcNAc...) asparagine" evidence="4">
    <location>
        <position position="387"/>
    </location>
</feature>
<feature type="glycosylation site" description="N-linked (GlcNAc...) asparagine" evidence="4">
    <location>
        <position position="418"/>
    </location>
</feature>
<feature type="glycosylation site" description="N-linked (GlcNAc...) asparagine" evidence="4">
    <location>
        <position position="463"/>
    </location>
</feature>
<feature type="glycosylation site" description="N-linked (GlcNAc...) asparagine" evidence="4">
    <location>
        <position position="471"/>
    </location>
</feature>
<feature type="glycosylation site" description="N-linked (GlcNAc...) asparagine" evidence="4">
    <location>
        <position position="541"/>
    </location>
</feature>
<feature type="glycosylation site" description="N-linked (GlcNAc...) asparagine" evidence="4">
    <location>
        <position position="575"/>
    </location>
</feature>
<feature type="glycosylation site" description="N-linked (GlcNAc...) asparagine" evidence="4">
    <location>
        <position position="695"/>
    </location>
</feature>
<feature type="disulfide bond" evidence="2">
    <location>
        <begin position="23"/>
        <end position="41"/>
    </location>
</feature>
<feature type="disulfide bond" evidence="2">
    <location>
        <begin position="31"/>
        <end position="454"/>
    </location>
</feature>
<feature type="disulfide bond" evidence="2">
    <location>
        <begin position="34"/>
        <end position="59"/>
    </location>
</feature>
<feature type="disulfide bond" evidence="2">
    <location>
        <begin position="44"/>
        <end position="70"/>
    </location>
</feature>
<feature type="disulfide bond" evidence="2">
    <location>
        <begin position="197"/>
        <end position="204"/>
    </location>
</feature>
<feature type="disulfide bond" evidence="2">
    <location>
        <begin position="252"/>
        <end position="293"/>
    </location>
</feature>
<feature type="disulfide bond" evidence="2">
    <location>
        <begin position="394"/>
        <end position="406"/>
    </location>
</feature>
<feature type="disulfide bond" evidence="2">
    <location>
        <begin position="426"/>
        <end position="452"/>
    </location>
</feature>
<feature type="disulfide bond" evidence="5">
    <location>
        <begin position="456"/>
        <end position="476"/>
    </location>
</feature>
<feature type="disulfide bond" evidence="5">
    <location>
        <begin position="467"/>
        <end position="479"/>
    </location>
</feature>
<feature type="disulfide bond" evidence="5">
    <location>
        <begin position="481"/>
        <end position="490"/>
    </location>
</feature>
<feature type="disulfide bond" evidence="5">
    <location>
        <begin position="492"/>
        <end position="519"/>
    </location>
</feature>
<feature type="disulfide bond" evidence="5">
    <location>
        <begin position="502"/>
        <end position="517"/>
    </location>
</feature>
<feature type="disulfide bond" evidence="5">
    <location>
        <begin position="511"/>
        <end position="522"/>
    </location>
</feature>
<feature type="disulfide bond" evidence="5">
    <location>
        <begin position="524"/>
        <end position="537"/>
    </location>
</feature>
<feature type="disulfide bond" evidence="5">
    <location>
        <begin position="539"/>
        <end position="560"/>
    </location>
</feature>
<feature type="disulfide bond" evidence="5">
    <location>
        <begin position="544"/>
        <end position="558"/>
    </location>
</feature>
<feature type="disulfide bond" evidence="5">
    <location>
        <begin position="552"/>
        <end position="563"/>
    </location>
</feature>
<feature type="disulfide bond" evidence="5">
    <location>
        <begin position="565"/>
        <end position="574"/>
    </location>
</feature>
<feature type="disulfide bond" evidence="5">
    <location>
        <begin position="576"/>
        <end position="599"/>
    </location>
</feature>
<feature type="disulfide bond" evidence="5">
    <location>
        <begin position="583"/>
        <end position="597"/>
    </location>
</feature>
<feature type="disulfide bond" evidence="5">
    <location>
        <begin position="591"/>
        <end position="602"/>
    </location>
</feature>
<feature type="disulfide bond" evidence="5">
    <location>
        <begin position="604"/>
        <end position="614"/>
    </location>
</feature>
<feature type="disulfide bond" evidence="1">
    <location>
        <begin position="617"/>
        <end position="620"/>
    </location>
</feature>
<feature type="disulfide bond" evidence="1">
    <location>
        <begin position="624"/>
        <end position="669"/>
    </location>
</feature>
<feature type="disulfide bond" evidence="1">
    <location>
        <begin position="630"/>
        <end position="649"/>
    </location>
</feature>
<feature type="disulfide bond" evidence="1">
    <location>
        <begin position="633"/>
        <end position="645"/>
    </location>
</feature>
<feature type="disulfide bond" evidence="1">
    <location>
        <begin position="677"/>
        <end position="701"/>
    </location>
</feature>